<keyword id="KW-0025">Alternative splicing</keyword>
<keyword id="KW-1048">Host nucleus</keyword>
<keyword id="KW-0945">Host-virus interaction</keyword>
<keyword id="KW-0813">Transport</keyword>
<keyword id="KW-0946">Virion</keyword>
<dbReference type="EMBL" id="M16561">
    <property type="protein sequence ID" value="AAA43505.1"/>
    <property type="molecule type" value="Genomic_RNA"/>
</dbReference>
<dbReference type="SMR" id="P08275"/>
<dbReference type="GO" id="GO:0042025">
    <property type="term" value="C:host cell nucleus"/>
    <property type="evidence" value="ECO:0007669"/>
    <property type="project" value="UniProtKB-SubCell"/>
</dbReference>
<dbReference type="GO" id="GO:0044423">
    <property type="term" value="C:virion component"/>
    <property type="evidence" value="ECO:0007669"/>
    <property type="project" value="UniProtKB-KW"/>
</dbReference>
<dbReference type="GO" id="GO:0039675">
    <property type="term" value="P:exit of virus from host cell nucleus through nuclear pore"/>
    <property type="evidence" value="ECO:0007669"/>
    <property type="project" value="InterPro"/>
</dbReference>
<dbReference type="Gene3D" id="1.10.287.230">
    <property type="match status" value="1"/>
</dbReference>
<dbReference type="InterPro" id="IPR000968">
    <property type="entry name" value="Flu_NS2"/>
</dbReference>
<dbReference type="Pfam" id="PF00601">
    <property type="entry name" value="Flu_NS2"/>
    <property type="match status" value="1"/>
</dbReference>
<dbReference type="SUPFAM" id="SSF101156">
    <property type="entry name" value="Nonstructural protein ns2, Nep, M1-binding domain"/>
    <property type="match status" value="1"/>
</dbReference>
<protein>
    <recommendedName>
        <fullName>Nuclear export protein</fullName>
        <shortName>NEP</shortName>
    </recommendedName>
    <alternativeName>
        <fullName>Non-structural protein 2</fullName>
        <shortName>NS2</shortName>
    </alternativeName>
</protein>
<reference key="1">
    <citation type="journal article" date="1987" name="Virology">
        <title>Genetic divergence of the NS genes of avian influenza viruses.</title>
        <authorList>
            <person name="Nakajima K."/>
            <person name="Nobusawa E."/>
            <person name="Ogawa T."/>
            <person name="Nakajima S."/>
        </authorList>
    </citation>
    <scope>NUCLEOTIDE SEQUENCE [GENOMIC RNA]</scope>
</reference>
<organism>
    <name type="scientific">Influenza A virus (strain A/Chicken/Japan/1924 H7N7)</name>
    <dbReference type="NCBI Taxonomy" id="11340"/>
    <lineage>
        <taxon>Viruses</taxon>
        <taxon>Riboviria</taxon>
        <taxon>Orthornavirae</taxon>
        <taxon>Negarnaviricota</taxon>
        <taxon>Polyploviricotina</taxon>
        <taxon>Insthoviricetes</taxon>
        <taxon>Articulavirales</taxon>
        <taxon>Orthomyxoviridae</taxon>
        <taxon>Alphainfluenzavirus</taxon>
        <taxon>Alphainfluenzavirus influenzae</taxon>
        <taxon>Influenza A virus</taxon>
    </lineage>
</organism>
<organismHost>
    <name type="scientific">Aves</name>
    <dbReference type="NCBI Taxonomy" id="8782"/>
</organismHost>
<organismHost>
    <name type="scientific">Equus caballus</name>
    <name type="common">Horse</name>
    <dbReference type="NCBI Taxonomy" id="9796"/>
</organismHost>
<organismHost>
    <name type="scientific">Homo sapiens</name>
    <name type="common">Human</name>
    <dbReference type="NCBI Taxonomy" id="9606"/>
</organismHost>
<organismHost>
    <name type="scientific">Phocidae</name>
    <name type="common">true seals</name>
    <dbReference type="NCBI Taxonomy" id="9709"/>
</organismHost>
<comment type="function">
    <text evidence="1">Mediates the nuclear export of encapsidated genomic RNAs (ribonucleoproteins, RNPs). Acts as an adapter between viral RNPs complexes and the nuclear export machinery of the cell. Possesses no intrinsic RNA-binding activity, but includes a C-terminal M1-binding domain. This domain is believed to allow recognition of RNPs to which the M1 protein is bound. Because the M1 protein is not available in large quantities until the later stages of infection, such an indirect recognition mechanism probably ensures that genomic RNPs are not exported from the nucleus before sufficient quantities of viral mRNA and progeny genomic RNA have been synthesized. Furthermore, the RNPs enters the cytoplasm only when they have associated with the M1 protein that is necessary to guide them to the plasma membrane. May down-regulate viral RNA synthesis when overproduced (By similarity).</text>
</comment>
<comment type="subunit">
    <text evidence="1">Binds M1 protein. May interact with human nucleoporin RAB/HRB and exportin XPO1/CRM1 (By similarity).</text>
</comment>
<comment type="subcellular location">
    <subcellularLocation>
        <location evidence="2">Virion</location>
    </subcellularLocation>
    <subcellularLocation>
        <location evidence="1">Host nucleus</location>
    </subcellularLocation>
</comment>
<comment type="alternative products">
    <event type="alternative splicing"/>
    <isoform>
        <id>P08275-1</id>
        <name>NEP</name>
        <name>NS2</name>
        <sequence type="displayed"/>
    </isoform>
    <isoform>
        <id>P08274-1</id>
        <name>NS1</name>
        <sequence type="external"/>
    </isoform>
</comment>
<comment type="miscellaneous">
    <text>Average number present in a viral particle is estimated to be 130-200 molecules.</text>
</comment>
<comment type="similarity">
    <text evidence="2">Belongs to the influenza viruses NEP family.</text>
</comment>
<gene>
    <name type="primary">NS</name>
</gene>
<feature type="chain" id="PRO_0000078980" description="Nuclear export protein">
    <location>
        <begin position="1" status="less than"/>
        <end position="118"/>
    </location>
</feature>
<feature type="short sequence motif" description="Nuclear export signal" evidence="1">
    <location>
        <begin position="9"/>
        <end position="18"/>
    </location>
</feature>
<feature type="short sequence motif" description="Nuclear export signal" evidence="1">
    <location>
        <begin position="82"/>
        <end position="91"/>
    </location>
</feature>
<feature type="non-terminal residue">
    <location>
        <position position="1"/>
    </location>
</feature>
<accession>P08275</accession>
<sequence>NTVSSFQDILMRMSKMQLGTSSEDLNGMITQLESLKLYRDSLGEAVMRVGDLHSLQSRNGKWREQLSQKFEEIRWLIEEVRHKLKITENSFEQITFMQALQLLLEVEQEIRTFSFQLI</sequence>
<evidence type="ECO:0000250" key="1"/>
<evidence type="ECO:0000305" key="2"/>
<proteinExistence type="inferred from homology"/>
<name>NEP_I24A0</name>